<dbReference type="EMBL" id="CP000736">
    <property type="protein sequence ID" value="ABR53288.1"/>
    <property type="molecule type" value="Genomic_DNA"/>
</dbReference>
<dbReference type="SMR" id="A6U4C0"/>
<dbReference type="KEGG" id="sah:SaurJH1_2463"/>
<dbReference type="HOGENOM" id="CLU_000445_90_1_9"/>
<dbReference type="GO" id="GO:0005737">
    <property type="term" value="C:cytoplasm"/>
    <property type="evidence" value="ECO:0007669"/>
    <property type="project" value="UniProtKB-SubCell"/>
</dbReference>
<dbReference type="GO" id="GO:0003677">
    <property type="term" value="F:DNA binding"/>
    <property type="evidence" value="ECO:0007669"/>
    <property type="project" value="UniProtKB-KW"/>
</dbReference>
<dbReference type="GO" id="GO:0000160">
    <property type="term" value="P:phosphorelay signal transduction system"/>
    <property type="evidence" value="ECO:0007669"/>
    <property type="project" value="UniProtKB-KW"/>
</dbReference>
<dbReference type="GO" id="GO:0006355">
    <property type="term" value="P:regulation of DNA-templated transcription"/>
    <property type="evidence" value="ECO:0007669"/>
    <property type="project" value="InterPro"/>
</dbReference>
<dbReference type="CDD" id="cd06170">
    <property type="entry name" value="LuxR_C_like"/>
    <property type="match status" value="1"/>
</dbReference>
<dbReference type="CDD" id="cd17535">
    <property type="entry name" value="REC_NarL-like"/>
    <property type="match status" value="1"/>
</dbReference>
<dbReference type="Gene3D" id="3.40.50.2300">
    <property type="match status" value="1"/>
</dbReference>
<dbReference type="InterPro" id="IPR011006">
    <property type="entry name" value="CheY-like_superfamily"/>
</dbReference>
<dbReference type="InterPro" id="IPR016032">
    <property type="entry name" value="Sig_transdc_resp-reg_C-effctor"/>
</dbReference>
<dbReference type="InterPro" id="IPR001789">
    <property type="entry name" value="Sig_transdc_resp-reg_receiver"/>
</dbReference>
<dbReference type="InterPro" id="IPR000792">
    <property type="entry name" value="Tscrpt_reg_LuxR_C"/>
</dbReference>
<dbReference type="InterPro" id="IPR039420">
    <property type="entry name" value="WalR-like"/>
</dbReference>
<dbReference type="PANTHER" id="PTHR43214:SF37">
    <property type="entry name" value="TRANSCRIPTIONAL REGULATORY PROTEIN YDFI"/>
    <property type="match status" value="1"/>
</dbReference>
<dbReference type="PANTHER" id="PTHR43214">
    <property type="entry name" value="TWO-COMPONENT RESPONSE REGULATOR"/>
    <property type="match status" value="1"/>
</dbReference>
<dbReference type="Pfam" id="PF00196">
    <property type="entry name" value="GerE"/>
    <property type="match status" value="1"/>
</dbReference>
<dbReference type="Pfam" id="PF00072">
    <property type="entry name" value="Response_reg"/>
    <property type="match status" value="1"/>
</dbReference>
<dbReference type="PRINTS" id="PR00038">
    <property type="entry name" value="HTHLUXR"/>
</dbReference>
<dbReference type="SMART" id="SM00421">
    <property type="entry name" value="HTH_LUXR"/>
    <property type="match status" value="1"/>
</dbReference>
<dbReference type="SMART" id="SM00448">
    <property type="entry name" value="REC"/>
    <property type="match status" value="1"/>
</dbReference>
<dbReference type="SUPFAM" id="SSF46894">
    <property type="entry name" value="C-terminal effector domain of the bipartite response regulators"/>
    <property type="match status" value="1"/>
</dbReference>
<dbReference type="SUPFAM" id="SSF52172">
    <property type="entry name" value="CheY-like"/>
    <property type="match status" value="1"/>
</dbReference>
<dbReference type="PROSITE" id="PS00622">
    <property type="entry name" value="HTH_LUXR_1"/>
    <property type="match status" value="1"/>
</dbReference>
<dbReference type="PROSITE" id="PS50043">
    <property type="entry name" value="HTH_LUXR_2"/>
    <property type="match status" value="1"/>
</dbReference>
<dbReference type="PROSITE" id="PS50110">
    <property type="entry name" value="RESPONSE_REGULATORY"/>
    <property type="match status" value="1"/>
</dbReference>
<feature type="chain" id="PRO_0000349344" description="Oxygen regulatory protein NreC">
    <location>
        <begin position="1"/>
        <end position="217"/>
    </location>
</feature>
<feature type="domain" description="Response regulatory" evidence="2">
    <location>
        <begin position="2"/>
        <end position="119"/>
    </location>
</feature>
<feature type="domain" description="HTH luxR-type" evidence="3">
    <location>
        <begin position="148"/>
        <end position="213"/>
    </location>
</feature>
<feature type="DNA-binding region" description="H-T-H motif" evidence="3">
    <location>
        <begin position="172"/>
        <end position="191"/>
    </location>
</feature>
<feature type="modified residue" description="4-aspartylphosphate" evidence="2">
    <location>
        <position position="53"/>
    </location>
</feature>
<accession>A6U4C0</accession>
<evidence type="ECO:0000250" key="1"/>
<evidence type="ECO:0000255" key="2">
    <source>
        <dbReference type="PROSITE-ProRule" id="PRU00169"/>
    </source>
</evidence>
<evidence type="ECO:0000255" key="3">
    <source>
        <dbReference type="PROSITE-ProRule" id="PRU00411"/>
    </source>
</evidence>
<evidence type="ECO:0000305" key="4"/>
<reference key="1">
    <citation type="submission" date="2007-06" db="EMBL/GenBank/DDBJ databases">
        <title>Complete sequence of chromosome of Staphylococcus aureus subsp. aureus JH1.</title>
        <authorList>
            <consortium name="US DOE Joint Genome Institute"/>
            <person name="Copeland A."/>
            <person name="Lucas S."/>
            <person name="Lapidus A."/>
            <person name="Barry K."/>
            <person name="Detter J.C."/>
            <person name="Glavina del Rio T."/>
            <person name="Hammon N."/>
            <person name="Israni S."/>
            <person name="Dalin E."/>
            <person name="Tice H."/>
            <person name="Pitluck S."/>
            <person name="Chain P."/>
            <person name="Malfatti S."/>
            <person name="Shin M."/>
            <person name="Vergez L."/>
            <person name="Schmutz J."/>
            <person name="Larimer F."/>
            <person name="Land M."/>
            <person name="Hauser L."/>
            <person name="Kyrpides N."/>
            <person name="Ivanova N."/>
            <person name="Tomasz A."/>
            <person name="Richardson P."/>
        </authorList>
    </citation>
    <scope>NUCLEOTIDE SEQUENCE [LARGE SCALE GENOMIC DNA]</scope>
    <source>
        <strain>JH1</strain>
    </source>
</reference>
<gene>
    <name type="primary">nreC</name>
    <name type="ordered locus">SaurJH1_2463</name>
</gene>
<comment type="function">
    <text evidence="1">Member of the two-component regulatory system NreB/NreC involved in the control of dissimilatory nitrate/nitrite reduction in response to oxygen. Phosphorylated NreC binds to a GC-rich palindromic sequence at the promoters of the nitrate (narGHJI) and nitrite (nir) reductase operons, as well as the putative nitrate transporter gene narT, and activates their expression (By similarity).</text>
</comment>
<comment type="subcellular location">
    <subcellularLocation>
        <location evidence="4">Cytoplasm</location>
    </subcellularLocation>
</comment>
<comment type="PTM">
    <text evidence="1">Phosphorylated by NreB.</text>
</comment>
<name>NREC_STAA2</name>
<sequence length="217" mass="24368">MKIVIADDHAVVRTGFSMILNYQNDMEVVATAADGVEAYQKVMEYKPDVLLMDLSMPPGESGLIATSKIADSFPETKILILTMFDDEEYLFHVLRNGAKGYILKNAPDEQLLLAIRTVYKGETYVDMKLTTSLVNEFVSNSNQDTANTTDPFKILSKRELEILPLIAKGYGNKEIAEKLFVSVKTVEAHKTHIMTKLGLKSKPELVEYALKKKLLEF</sequence>
<proteinExistence type="inferred from homology"/>
<protein>
    <recommendedName>
        <fullName>Oxygen regulatory protein NreC</fullName>
    </recommendedName>
    <alternativeName>
        <fullName>Nitrogen regulation protein C</fullName>
    </alternativeName>
</protein>
<organism>
    <name type="scientific">Staphylococcus aureus (strain JH1)</name>
    <dbReference type="NCBI Taxonomy" id="359787"/>
    <lineage>
        <taxon>Bacteria</taxon>
        <taxon>Bacillati</taxon>
        <taxon>Bacillota</taxon>
        <taxon>Bacilli</taxon>
        <taxon>Bacillales</taxon>
        <taxon>Staphylococcaceae</taxon>
        <taxon>Staphylococcus</taxon>
    </lineage>
</organism>
<keyword id="KW-0010">Activator</keyword>
<keyword id="KW-0963">Cytoplasm</keyword>
<keyword id="KW-0238">DNA-binding</keyword>
<keyword id="KW-0597">Phosphoprotein</keyword>
<keyword id="KW-0804">Transcription</keyword>
<keyword id="KW-0805">Transcription regulation</keyword>
<keyword id="KW-0902">Two-component regulatory system</keyword>